<sequence length="392" mass="42106">MDPTDLSFSPDEINKLIETGLNTVEYFTSQQVTGTSSLGKNTIPPGVTGLLTNAAEAKIQESTNHQKGSVGGGAKPKKPRPKIAIVPADDKTVPGKPIPNPLLGLDSTPSTQTVLDLSGKTLPSGSYKGVKLAKFGKENLMTRFIEEPRENPIATSSPIDFKRGAGIPAGSIEGSTQSDGWEMKSRSLSGAIHPVLQSPLQQGDLNALVTSVQSLALNVNEILNTVRNLDSRMNQLETKVDRILSSQSLIQTIKNDIVGLKAGMATLEGMITTVKIMDPGVPSNVTVEDVRKTLSNHAVVVPESFNDSFLTQSEDVISLDELARPTATSVKKIVRKVPPQKDLTGLKITLEQLAKDCISKPKMREEYLLKINQASSEAQLIDLKKAIIRSAI</sequence>
<organismHost>
    <name type="scientific">Canis lupus familiaris</name>
    <name type="common">Dog</name>
    <name type="synonym">Canis familiaris</name>
    <dbReference type="NCBI Taxonomy" id="9615"/>
</organismHost>
<organismHost>
    <name type="scientific">Homo sapiens</name>
    <name type="common">Human</name>
    <dbReference type="NCBI Taxonomy" id="9606"/>
</organismHost>
<keyword id="KW-0002">3D-structure</keyword>
<keyword id="KW-0175">Coiled coil</keyword>
<keyword id="KW-0597">Phosphoprotein</keyword>
<keyword id="KW-1185">Reference proteome</keyword>
<keyword id="KW-0691">RNA editing</keyword>
<keyword id="KW-0693">Viral RNA replication</keyword>
<proteinExistence type="evidence at protein level"/>
<feature type="chain" id="PRO_0000142718" description="Phosphoprotein">
    <location>
        <begin position="1"/>
        <end position="392"/>
    </location>
</feature>
<feature type="region of interest" description="Disordered" evidence="5">
    <location>
        <begin position="61"/>
        <end position="107"/>
    </location>
</feature>
<feature type="region of interest" description="Disordered" evidence="5">
    <location>
        <begin position="152"/>
        <end position="182"/>
    </location>
</feature>
<feature type="region of interest" description="Multimerization" evidence="3">
    <location>
        <begin position="217"/>
        <end position="280"/>
    </location>
</feature>
<feature type="coiled-coil region" evidence="4">
    <location>
        <begin position="219"/>
        <end position="246"/>
    </location>
</feature>
<feature type="helix" evidence="8">
    <location>
        <begin position="17"/>
        <end position="23"/>
    </location>
</feature>
<feature type="helix" evidence="9">
    <location>
        <begin position="202"/>
        <end position="270"/>
    </location>
</feature>
<name>PHOSP_PIV5</name>
<evidence type="ECO:0000250" key="1">
    <source>
        <dbReference type="UniProtKB" id="P04859"/>
    </source>
</evidence>
<evidence type="ECO:0000250" key="2">
    <source>
        <dbReference type="UniProtKB" id="P06162"/>
    </source>
</evidence>
<evidence type="ECO:0000250" key="3">
    <source>
        <dbReference type="UniProtKB" id="Q77M42"/>
    </source>
</evidence>
<evidence type="ECO:0000255" key="4"/>
<evidence type="ECO:0000256" key="5">
    <source>
        <dbReference type="SAM" id="MobiDB-lite"/>
    </source>
</evidence>
<evidence type="ECO:0000269" key="6">
    <source>
    </source>
</evidence>
<evidence type="ECO:0000305" key="7"/>
<evidence type="ECO:0007829" key="8">
    <source>
        <dbReference type="PDB" id="5WKN"/>
    </source>
</evidence>
<evidence type="ECO:0007829" key="9">
    <source>
        <dbReference type="PDB" id="6VAG"/>
    </source>
</evidence>
<reference key="1">
    <citation type="journal article" date="1988" name="Cell">
        <title>Two mRNAs that differ by two nontemplated nucleotides encode the amino coterminal proteins P and V of the paramyxovirus SV5.</title>
        <authorList>
            <person name="Thomas S.M."/>
            <person name="Lamb R.A."/>
            <person name="Paterson R.G."/>
        </authorList>
    </citation>
    <scope>NUCLEOTIDE SEQUENCE [MRNA]</scope>
    <scope>RNA EDITING</scope>
</reference>
<accession>P11208</accession>
<gene>
    <name type="primary">P/V</name>
</gene>
<dbReference type="EMBL" id="J03142">
    <property type="status" value="NOT_ANNOTATED_CDS"/>
    <property type="molecule type" value="mRNA"/>
</dbReference>
<dbReference type="EMBL" id="AF052755">
    <property type="protein sequence ID" value="AAC95513.1"/>
    <property type="molecule type" value="Genomic_RNA"/>
</dbReference>
<dbReference type="PIR" id="B31594">
    <property type="entry name" value="RRNZSP"/>
</dbReference>
<dbReference type="PDB" id="5WKN">
    <property type="method" value="X-ray"/>
    <property type="resolution" value="2.65 A"/>
    <property type="chains" value="C/D=2-50"/>
</dbReference>
<dbReference type="PDB" id="6V85">
    <property type="method" value="EM"/>
    <property type="resolution" value="4.38 A"/>
    <property type="chains" value="B/C/D/E/F=1-392"/>
</dbReference>
<dbReference type="PDB" id="6V86">
    <property type="method" value="EM"/>
    <property type="resolution" value="4.63 A"/>
    <property type="chains" value="B/C/D/E/F=1-392"/>
</dbReference>
<dbReference type="PDB" id="6VAG">
    <property type="method" value="X-ray"/>
    <property type="resolution" value="1.40 A"/>
    <property type="chains" value="A/B=172-278"/>
</dbReference>
<dbReference type="PDBsum" id="5WKN"/>
<dbReference type="PDBsum" id="6V85"/>
<dbReference type="PDBsum" id="6V86"/>
<dbReference type="PDBsum" id="6VAG"/>
<dbReference type="EMDB" id="EMD-21095"/>
<dbReference type="EMDB" id="EMD-21096"/>
<dbReference type="SMR" id="P11208"/>
<dbReference type="ABCD" id="P11208">
    <property type="antibodies" value="2 sequenced antibodies"/>
</dbReference>
<dbReference type="KEGG" id="vg:3160800"/>
<dbReference type="Proteomes" id="UP000007232">
    <property type="component" value="Segment"/>
</dbReference>
<dbReference type="Gene3D" id="1.20.5.300">
    <property type="match status" value="1"/>
</dbReference>
<dbReference type="Gene3D" id="1.10.8.10">
    <property type="entry name" value="DNA helicase RuvA subunit, C-terminal domain"/>
    <property type="match status" value="1"/>
</dbReference>
<dbReference type="InterPro" id="IPR004897">
    <property type="entry name" value="P/V_Pprotein_paramyxoviral"/>
</dbReference>
<dbReference type="InterPro" id="IPR025909">
    <property type="entry name" value="Soyouz_module"/>
</dbReference>
<dbReference type="Pfam" id="PF03210">
    <property type="entry name" value="Paramyx_P_V_C"/>
    <property type="match status" value="1"/>
</dbReference>
<dbReference type="Pfam" id="PF14313">
    <property type="entry name" value="Soyouz_module"/>
    <property type="match status" value="1"/>
</dbReference>
<protein>
    <recommendedName>
        <fullName>Phosphoprotein</fullName>
        <shortName>Protein P</shortName>
    </recommendedName>
</protein>
<comment type="function">
    <text evidence="2 3">Essential cofactor of the RNA polymerase L that plays a central role in the transcription and replication by forming the polymerase complex with RNA polymerase L and recruiting L to the genomic N-RNA template for RNA synthesis (By similarity). Also plays a central role in the encapsidation of nascent RNA chains by forming the encapsidation complex with the nucleocapsid protein N (N-P complex). Acts as a chaperone for newly synthesized free N protein, so-called N0, allowing encapsidation of nascent RNA chains during replication (By similarity). The nucleoprotein protein N prevents excessive phosphorylation of P, which leads to down-regulation of viral transcription/ replication. Participates, together with N, in the formation of viral factories (viroplasms), which are large inclusions in the host cytoplasm where replication takes place (By similarity).</text>
</comment>
<comment type="subunit">
    <text evidence="2 3">Homotetramer. Interacts (via multimerization domain) with polymerase L; this interaction forms the polymerase L-P complex (By similarity). Interacts (via N-terminus) with N0 (via Ncore); this interaction allows P to chaperon N0 to avoid N polymerization before encapsidation. Interacts (via C-terminus) with N-RNA template; this interaction positions the polymerase on the template for both transcription and replication (By similarity).</text>
</comment>
<comment type="domain">
    <text evidence="1 2 3">The N-terminus consists of a long intrinsically disordered tail. The central part contains the coiled-coil multimerization domain (PMD) (By similarity). Forms a four-stranded coiled coil structure (By similarity). The C-terminus constitutes the alpha-helical domain that binds to the nucleocapsid (N-RNA complex) (By similarity).</text>
</comment>
<comment type="RNA editing">
    <location>
        <position position="164" evidence="6"/>
    </location>
    <text>Partially edited. RNA editing at this position consists of an insertion of two guanine nucleotides. The sequence displayed here is the P protein, derived from the edited RNA. The unedited RNA version gives rise to the V protein (AC P11207).</text>
</comment>
<comment type="similarity">
    <text evidence="7">Belongs to the rubulavirus/avulavirus P protein family.</text>
</comment>
<organism>
    <name type="scientific">Parainfluenza virus 5 (strain W3)</name>
    <name type="common">PIV5</name>
    <name type="synonym">Simian virus 5</name>
    <dbReference type="NCBI Taxonomy" id="11208"/>
    <lineage>
        <taxon>Viruses</taxon>
        <taxon>Riboviria</taxon>
        <taxon>Orthornavirae</taxon>
        <taxon>Negarnaviricota</taxon>
        <taxon>Haploviricotina</taxon>
        <taxon>Monjiviricetes</taxon>
        <taxon>Mononegavirales</taxon>
        <taxon>Paramyxoviridae</taxon>
        <taxon>Rubulavirinae</taxon>
        <taxon>Orthorubulavirus</taxon>
        <taxon>Orthorubulavirus mammalis</taxon>
        <taxon>Mammalian orthorubulavirus 5</taxon>
    </lineage>
</organism>